<evidence type="ECO:0000255" key="1">
    <source>
        <dbReference type="HAMAP-Rule" id="MF_00059"/>
    </source>
</evidence>
<accession>Q134V3</accession>
<gene>
    <name evidence="1" type="primary">rpoA</name>
    <name type="ordered locus">RPD_3160</name>
</gene>
<keyword id="KW-0240">DNA-directed RNA polymerase</keyword>
<keyword id="KW-0548">Nucleotidyltransferase</keyword>
<keyword id="KW-0804">Transcription</keyword>
<keyword id="KW-0808">Transferase</keyword>
<protein>
    <recommendedName>
        <fullName evidence="1">DNA-directed RNA polymerase subunit alpha</fullName>
        <shortName evidence="1">RNAP subunit alpha</shortName>
        <ecNumber evidence="1">2.7.7.6</ecNumber>
    </recommendedName>
    <alternativeName>
        <fullName evidence="1">RNA polymerase subunit alpha</fullName>
    </alternativeName>
    <alternativeName>
        <fullName evidence="1">Transcriptase subunit alpha</fullName>
    </alternativeName>
</protein>
<proteinExistence type="inferred from homology"/>
<feature type="chain" id="PRO_0000264535" description="DNA-directed RNA polymerase subunit alpha">
    <location>
        <begin position="1"/>
        <end position="339"/>
    </location>
</feature>
<feature type="region of interest" description="Alpha N-terminal domain (alpha-NTD)" evidence="1">
    <location>
        <begin position="1"/>
        <end position="235"/>
    </location>
</feature>
<feature type="region of interest" description="Alpha C-terminal domain (alpha-CTD)" evidence="1">
    <location>
        <begin position="251"/>
        <end position="339"/>
    </location>
</feature>
<name>RPOA_RHOPS</name>
<comment type="function">
    <text evidence="1">DNA-dependent RNA polymerase catalyzes the transcription of DNA into RNA using the four ribonucleoside triphosphates as substrates.</text>
</comment>
<comment type="catalytic activity">
    <reaction evidence="1">
        <text>RNA(n) + a ribonucleoside 5'-triphosphate = RNA(n+1) + diphosphate</text>
        <dbReference type="Rhea" id="RHEA:21248"/>
        <dbReference type="Rhea" id="RHEA-COMP:14527"/>
        <dbReference type="Rhea" id="RHEA-COMP:17342"/>
        <dbReference type="ChEBI" id="CHEBI:33019"/>
        <dbReference type="ChEBI" id="CHEBI:61557"/>
        <dbReference type="ChEBI" id="CHEBI:140395"/>
        <dbReference type="EC" id="2.7.7.6"/>
    </reaction>
</comment>
<comment type="subunit">
    <text evidence="1">Homodimer. The RNAP catalytic core consists of 2 alpha, 1 beta, 1 beta' and 1 omega subunit. When a sigma factor is associated with the core the holoenzyme is formed, which can initiate transcription.</text>
</comment>
<comment type="domain">
    <text evidence="1">The N-terminal domain is essential for RNAP assembly and basal transcription, whereas the C-terminal domain is involved in interaction with transcriptional regulators and with upstream promoter elements.</text>
</comment>
<comment type="similarity">
    <text evidence="1">Belongs to the RNA polymerase alpha chain family.</text>
</comment>
<dbReference type="EC" id="2.7.7.6" evidence="1"/>
<dbReference type="EMBL" id="CP000283">
    <property type="protein sequence ID" value="ABE40386.1"/>
    <property type="molecule type" value="Genomic_DNA"/>
</dbReference>
<dbReference type="SMR" id="Q134V3"/>
<dbReference type="STRING" id="316057.RPD_3160"/>
<dbReference type="KEGG" id="rpd:RPD_3160"/>
<dbReference type="eggNOG" id="COG0202">
    <property type="taxonomic scope" value="Bacteria"/>
</dbReference>
<dbReference type="HOGENOM" id="CLU_053084_0_0_5"/>
<dbReference type="BioCyc" id="RPAL316057:RPD_RS15865-MONOMER"/>
<dbReference type="Proteomes" id="UP000001818">
    <property type="component" value="Chromosome"/>
</dbReference>
<dbReference type="GO" id="GO:0005737">
    <property type="term" value="C:cytoplasm"/>
    <property type="evidence" value="ECO:0007669"/>
    <property type="project" value="UniProtKB-ARBA"/>
</dbReference>
<dbReference type="GO" id="GO:0000428">
    <property type="term" value="C:DNA-directed RNA polymerase complex"/>
    <property type="evidence" value="ECO:0007669"/>
    <property type="project" value="UniProtKB-KW"/>
</dbReference>
<dbReference type="GO" id="GO:0003677">
    <property type="term" value="F:DNA binding"/>
    <property type="evidence" value="ECO:0007669"/>
    <property type="project" value="UniProtKB-UniRule"/>
</dbReference>
<dbReference type="GO" id="GO:0003899">
    <property type="term" value="F:DNA-directed RNA polymerase activity"/>
    <property type="evidence" value="ECO:0007669"/>
    <property type="project" value="UniProtKB-UniRule"/>
</dbReference>
<dbReference type="GO" id="GO:0046983">
    <property type="term" value="F:protein dimerization activity"/>
    <property type="evidence" value="ECO:0007669"/>
    <property type="project" value="InterPro"/>
</dbReference>
<dbReference type="GO" id="GO:0006351">
    <property type="term" value="P:DNA-templated transcription"/>
    <property type="evidence" value="ECO:0007669"/>
    <property type="project" value="UniProtKB-UniRule"/>
</dbReference>
<dbReference type="CDD" id="cd06928">
    <property type="entry name" value="RNAP_alpha_NTD"/>
    <property type="match status" value="1"/>
</dbReference>
<dbReference type="FunFam" id="1.10.150.20:FF:000001">
    <property type="entry name" value="DNA-directed RNA polymerase subunit alpha"/>
    <property type="match status" value="1"/>
</dbReference>
<dbReference type="FunFam" id="2.170.120.12:FF:000001">
    <property type="entry name" value="DNA-directed RNA polymerase subunit alpha"/>
    <property type="match status" value="1"/>
</dbReference>
<dbReference type="Gene3D" id="1.10.150.20">
    <property type="entry name" value="5' to 3' exonuclease, C-terminal subdomain"/>
    <property type="match status" value="1"/>
</dbReference>
<dbReference type="Gene3D" id="2.170.120.12">
    <property type="entry name" value="DNA-directed RNA polymerase, insert domain"/>
    <property type="match status" value="1"/>
</dbReference>
<dbReference type="Gene3D" id="3.30.1360.10">
    <property type="entry name" value="RNA polymerase, RBP11-like subunit"/>
    <property type="match status" value="1"/>
</dbReference>
<dbReference type="HAMAP" id="MF_00059">
    <property type="entry name" value="RNApol_bact_RpoA"/>
    <property type="match status" value="1"/>
</dbReference>
<dbReference type="InterPro" id="IPR011262">
    <property type="entry name" value="DNA-dir_RNA_pol_insert"/>
</dbReference>
<dbReference type="InterPro" id="IPR011263">
    <property type="entry name" value="DNA-dir_RNA_pol_RpoA/D/Rpb3"/>
</dbReference>
<dbReference type="InterPro" id="IPR011773">
    <property type="entry name" value="DNA-dir_RpoA"/>
</dbReference>
<dbReference type="InterPro" id="IPR036603">
    <property type="entry name" value="RBP11-like"/>
</dbReference>
<dbReference type="InterPro" id="IPR011260">
    <property type="entry name" value="RNAP_asu_C"/>
</dbReference>
<dbReference type="InterPro" id="IPR036643">
    <property type="entry name" value="RNApol_insert_sf"/>
</dbReference>
<dbReference type="NCBIfam" id="NF003513">
    <property type="entry name" value="PRK05182.1-2"/>
    <property type="match status" value="1"/>
</dbReference>
<dbReference type="NCBIfam" id="NF003519">
    <property type="entry name" value="PRK05182.2-5"/>
    <property type="match status" value="1"/>
</dbReference>
<dbReference type="NCBIfam" id="TIGR02027">
    <property type="entry name" value="rpoA"/>
    <property type="match status" value="1"/>
</dbReference>
<dbReference type="Pfam" id="PF01000">
    <property type="entry name" value="RNA_pol_A_bac"/>
    <property type="match status" value="1"/>
</dbReference>
<dbReference type="Pfam" id="PF03118">
    <property type="entry name" value="RNA_pol_A_CTD"/>
    <property type="match status" value="1"/>
</dbReference>
<dbReference type="Pfam" id="PF01193">
    <property type="entry name" value="RNA_pol_L"/>
    <property type="match status" value="1"/>
</dbReference>
<dbReference type="SMART" id="SM00662">
    <property type="entry name" value="RPOLD"/>
    <property type="match status" value="1"/>
</dbReference>
<dbReference type="SUPFAM" id="SSF47789">
    <property type="entry name" value="C-terminal domain of RNA polymerase alpha subunit"/>
    <property type="match status" value="1"/>
</dbReference>
<dbReference type="SUPFAM" id="SSF56553">
    <property type="entry name" value="Insert subdomain of RNA polymerase alpha subunit"/>
    <property type="match status" value="1"/>
</dbReference>
<dbReference type="SUPFAM" id="SSF55257">
    <property type="entry name" value="RBP11-like subunits of RNA polymerase"/>
    <property type="match status" value="1"/>
</dbReference>
<reference key="1">
    <citation type="submission" date="2006-03" db="EMBL/GenBank/DDBJ databases">
        <title>Complete sequence of Rhodopseudomonas palustris BisB5.</title>
        <authorList>
            <consortium name="US DOE Joint Genome Institute"/>
            <person name="Copeland A."/>
            <person name="Lucas S."/>
            <person name="Lapidus A."/>
            <person name="Barry K."/>
            <person name="Detter J.C."/>
            <person name="Glavina del Rio T."/>
            <person name="Hammon N."/>
            <person name="Israni S."/>
            <person name="Dalin E."/>
            <person name="Tice H."/>
            <person name="Pitluck S."/>
            <person name="Chain P."/>
            <person name="Malfatti S."/>
            <person name="Shin M."/>
            <person name="Vergez L."/>
            <person name="Schmutz J."/>
            <person name="Larimer F."/>
            <person name="Land M."/>
            <person name="Hauser L."/>
            <person name="Pelletier D.A."/>
            <person name="Kyrpides N."/>
            <person name="Lykidis A."/>
            <person name="Oda Y."/>
            <person name="Harwood C.S."/>
            <person name="Richardson P."/>
        </authorList>
    </citation>
    <scope>NUCLEOTIDE SEQUENCE [LARGE SCALE GENOMIC DNA]</scope>
    <source>
        <strain>BisB5</strain>
    </source>
</reference>
<sequence>MTIQKNWQELIRPNKLQVSPGSDATRFATLVAEPLERGFGQTLGNALRRVLLSSLQGAAVQSVQIDGVLHEFSSIAGVREDVTDIVLNIKDISLKMQGEGPKRMVVKKQGPGVVTAGDIQTVGDIVVLNPDLQICTLDEGAEIRMEFTVNTGKGYVAAERNRPEDAPIGLIPVDSLYSPVRKVSYKVENTREGQILDYDKLTMTVETNGALTPDDAVAFAARILQDQLNVFVNFEEPRKEVTQEIIPDLAFNPAFLKKVDELELSVRSANCLKNDNIVYIGDLVQKSEAEMLRTPNFGRKSLNEIKEVLAQMGLHLGMEVPGWPPENIDELAKRFEDHY</sequence>
<organism>
    <name type="scientific">Rhodopseudomonas palustris (strain BisB5)</name>
    <dbReference type="NCBI Taxonomy" id="316057"/>
    <lineage>
        <taxon>Bacteria</taxon>
        <taxon>Pseudomonadati</taxon>
        <taxon>Pseudomonadota</taxon>
        <taxon>Alphaproteobacteria</taxon>
        <taxon>Hyphomicrobiales</taxon>
        <taxon>Nitrobacteraceae</taxon>
        <taxon>Rhodopseudomonas</taxon>
    </lineage>
</organism>